<reference key="1">
    <citation type="journal article" date="2003" name="DNA Res.">
        <title>Prediction of the coding sequences of mouse homologues of KIAA gene: III. The complete nucleotide sequences of 500 mouse KIAA-homologous cDNAs identified by screening of terminal sequences of cDNA clones randomly sampled from size-fractionated libraries.</title>
        <authorList>
            <person name="Okazaki N."/>
            <person name="Kikuno R."/>
            <person name="Ohara R."/>
            <person name="Inamoto S."/>
            <person name="Koseki H."/>
            <person name="Hiraoka S."/>
            <person name="Saga Y."/>
            <person name="Nagase T."/>
            <person name="Ohara O."/>
            <person name="Koga H."/>
        </authorList>
    </citation>
    <scope>NUCLEOTIDE SEQUENCE [LARGE SCALE MRNA]</scope>
    <source>
        <tissue>Brain</tissue>
    </source>
</reference>
<reference key="2">
    <citation type="journal article" date="2009" name="PLoS Biol.">
        <title>Lineage-specific biology revealed by a finished genome assembly of the mouse.</title>
        <authorList>
            <person name="Church D.M."/>
            <person name="Goodstadt L."/>
            <person name="Hillier L.W."/>
            <person name="Zody M.C."/>
            <person name="Goldstein S."/>
            <person name="She X."/>
            <person name="Bult C.J."/>
            <person name="Agarwala R."/>
            <person name="Cherry J.L."/>
            <person name="DiCuccio M."/>
            <person name="Hlavina W."/>
            <person name="Kapustin Y."/>
            <person name="Meric P."/>
            <person name="Maglott D."/>
            <person name="Birtle Z."/>
            <person name="Marques A.C."/>
            <person name="Graves T."/>
            <person name="Zhou S."/>
            <person name="Teague B."/>
            <person name="Potamousis K."/>
            <person name="Churas C."/>
            <person name="Place M."/>
            <person name="Herschleb J."/>
            <person name="Runnheim R."/>
            <person name="Forrest D."/>
            <person name="Amos-Landgraf J."/>
            <person name="Schwartz D.C."/>
            <person name="Cheng Z."/>
            <person name="Lindblad-Toh K."/>
            <person name="Eichler E.E."/>
            <person name="Ponting C.P."/>
        </authorList>
    </citation>
    <scope>NUCLEOTIDE SEQUENCE [LARGE SCALE GENOMIC DNA]</scope>
    <source>
        <strain>C57BL/6J</strain>
    </source>
</reference>
<reference key="3">
    <citation type="journal article" date="2004" name="Genome Res.">
        <title>The status, quality, and expansion of the NIH full-length cDNA project: the Mammalian Gene Collection (MGC).</title>
        <authorList>
            <consortium name="The MGC Project Team"/>
        </authorList>
    </citation>
    <scope>NUCLEOTIDE SEQUENCE [LARGE SCALE MRNA]</scope>
    <source>
        <strain>C57BL/6J</strain>
        <tissue>Brain</tissue>
    </source>
</reference>
<accession>Q6ZPT1</accession>
<accession>Q505G5</accession>
<organism>
    <name type="scientific">Mus musculus</name>
    <name type="common">Mouse</name>
    <dbReference type="NCBI Taxonomy" id="10090"/>
    <lineage>
        <taxon>Eukaryota</taxon>
        <taxon>Metazoa</taxon>
        <taxon>Chordata</taxon>
        <taxon>Craniata</taxon>
        <taxon>Vertebrata</taxon>
        <taxon>Euteleostomi</taxon>
        <taxon>Mammalia</taxon>
        <taxon>Eutheria</taxon>
        <taxon>Euarchontoglires</taxon>
        <taxon>Glires</taxon>
        <taxon>Rodentia</taxon>
        <taxon>Myomorpha</taxon>
        <taxon>Muroidea</taxon>
        <taxon>Muridae</taxon>
        <taxon>Murinae</taxon>
        <taxon>Mus</taxon>
        <taxon>Mus</taxon>
    </lineage>
</organism>
<feature type="chain" id="PRO_0000119111" description="Kelch-like protein 9">
    <location>
        <begin position="1"/>
        <end position="617"/>
    </location>
</feature>
<feature type="domain" description="BTB" evidence="2">
    <location>
        <begin position="50"/>
        <end position="119"/>
    </location>
</feature>
<feature type="domain" description="BACK">
    <location>
        <begin position="154"/>
        <end position="255"/>
    </location>
</feature>
<feature type="repeat" description="Kelch 1">
    <location>
        <begin position="299"/>
        <end position="347"/>
    </location>
</feature>
<feature type="repeat" description="Kelch 2">
    <location>
        <begin position="348"/>
        <end position="399"/>
    </location>
</feature>
<feature type="repeat" description="Kelch 3">
    <location>
        <begin position="400"/>
        <end position="446"/>
    </location>
</feature>
<feature type="repeat" description="Kelch 4">
    <location>
        <begin position="448"/>
        <end position="493"/>
    </location>
</feature>
<feature type="repeat" description="Kelch 5">
    <location>
        <begin position="495"/>
        <end position="545"/>
    </location>
</feature>
<feature type="repeat" description="Kelch 6">
    <location>
        <begin position="546"/>
        <end position="594"/>
    </location>
</feature>
<feature type="region of interest" description="Disordered" evidence="3">
    <location>
        <begin position="595"/>
        <end position="617"/>
    </location>
</feature>
<evidence type="ECO:0000250" key="1"/>
<evidence type="ECO:0000255" key="2">
    <source>
        <dbReference type="PROSITE-ProRule" id="PRU00037"/>
    </source>
</evidence>
<evidence type="ECO:0000256" key="3">
    <source>
        <dbReference type="SAM" id="MobiDB-lite"/>
    </source>
</evidence>
<evidence type="ECO:0000305" key="4"/>
<proteinExistence type="evidence at transcript level"/>
<protein>
    <recommendedName>
        <fullName>Kelch-like protein 9</fullName>
    </recommendedName>
</protein>
<dbReference type="EMBL" id="AK129338">
    <property type="protein sequence ID" value="BAC98148.1"/>
    <property type="status" value="ALT_INIT"/>
    <property type="molecule type" value="mRNA"/>
</dbReference>
<dbReference type="EMBL" id="BC094556">
    <property type="protein sequence ID" value="AAH94556.1"/>
    <property type="molecule type" value="mRNA"/>
</dbReference>
<dbReference type="EMBL" id="AL928605">
    <property type="status" value="NOT_ANNOTATED_CDS"/>
    <property type="molecule type" value="Genomic_DNA"/>
</dbReference>
<dbReference type="CCDS" id="CCDS38800.1"/>
<dbReference type="RefSeq" id="NP_766459.2">
    <property type="nucleotide sequence ID" value="NM_172871.2"/>
</dbReference>
<dbReference type="SMR" id="Q6ZPT1"/>
<dbReference type="BioGRID" id="232417">
    <property type="interactions" value="10"/>
</dbReference>
<dbReference type="FunCoup" id="Q6ZPT1">
    <property type="interactions" value="274"/>
</dbReference>
<dbReference type="STRING" id="10090.ENSMUSP00000092602"/>
<dbReference type="iPTMnet" id="Q6ZPT1"/>
<dbReference type="PhosphoSitePlus" id="Q6ZPT1"/>
<dbReference type="PaxDb" id="10090-ENSMUSP00000092602"/>
<dbReference type="PeptideAtlas" id="Q6ZPT1"/>
<dbReference type="ProteomicsDB" id="264777"/>
<dbReference type="Pumba" id="Q6ZPT1"/>
<dbReference type="Antibodypedia" id="24868">
    <property type="antibodies" value="149 antibodies from 24 providers"/>
</dbReference>
<dbReference type="Ensembl" id="ENSMUST00000094993.3">
    <property type="protein sequence ID" value="ENSMUSP00000092602.3"/>
    <property type="gene ID" value="ENSMUSG00000070923.5"/>
</dbReference>
<dbReference type="GeneID" id="242521"/>
<dbReference type="KEGG" id="mmu:242521"/>
<dbReference type="UCSC" id="uc008tnk.1">
    <property type="organism name" value="mouse"/>
</dbReference>
<dbReference type="AGR" id="MGI:2180122"/>
<dbReference type="CTD" id="55958"/>
<dbReference type="MGI" id="MGI:2180122">
    <property type="gene designation" value="Klhl9"/>
</dbReference>
<dbReference type="VEuPathDB" id="HostDB:ENSMUSG00000070923"/>
<dbReference type="eggNOG" id="KOG4441">
    <property type="taxonomic scope" value="Eukaryota"/>
</dbReference>
<dbReference type="GeneTree" id="ENSGT00940000154359"/>
<dbReference type="HOGENOM" id="CLU_004253_14_3_1"/>
<dbReference type="InParanoid" id="Q6ZPT1"/>
<dbReference type="OMA" id="RAQEWKS"/>
<dbReference type="OrthoDB" id="1925334at2759"/>
<dbReference type="PhylomeDB" id="Q6ZPT1"/>
<dbReference type="TreeFam" id="TF328485"/>
<dbReference type="Reactome" id="R-MMU-8951664">
    <property type="pathway name" value="Neddylation"/>
</dbReference>
<dbReference type="Reactome" id="R-MMU-983168">
    <property type="pathway name" value="Antigen processing: Ubiquitination &amp; Proteasome degradation"/>
</dbReference>
<dbReference type="UniPathway" id="UPA00143"/>
<dbReference type="BioGRID-ORCS" id="242521">
    <property type="hits" value="6 hits in 77 CRISPR screens"/>
</dbReference>
<dbReference type="ChiTaRS" id="Klhl9">
    <property type="organism name" value="mouse"/>
</dbReference>
<dbReference type="PRO" id="PR:Q6ZPT1"/>
<dbReference type="Proteomes" id="UP000000589">
    <property type="component" value="Chromosome 4"/>
</dbReference>
<dbReference type="RNAct" id="Q6ZPT1">
    <property type="molecule type" value="protein"/>
</dbReference>
<dbReference type="Bgee" id="ENSMUSG00000070923">
    <property type="expression patterns" value="Expressed in medial ganglionic eminence and 270 other cell types or tissues"/>
</dbReference>
<dbReference type="GO" id="GO:0031463">
    <property type="term" value="C:Cul3-RING ubiquitin ligase complex"/>
    <property type="evidence" value="ECO:0000250"/>
    <property type="project" value="UniProtKB"/>
</dbReference>
<dbReference type="GO" id="GO:0030496">
    <property type="term" value="C:midbody"/>
    <property type="evidence" value="ECO:0000250"/>
    <property type="project" value="UniProtKB"/>
</dbReference>
<dbReference type="GO" id="GO:0097602">
    <property type="term" value="F:cullin family protein binding"/>
    <property type="evidence" value="ECO:0007669"/>
    <property type="project" value="Ensembl"/>
</dbReference>
<dbReference type="GO" id="GO:0004842">
    <property type="term" value="F:ubiquitin-protein transferase activity"/>
    <property type="evidence" value="ECO:0007669"/>
    <property type="project" value="Ensembl"/>
</dbReference>
<dbReference type="GO" id="GO:0051301">
    <property type="term" value="P:cell division"/>
    <property type="evidence" value="ECO:0007669"/>
    <property type="project" value="UniProtKB-KW"/>
</dbReference>
<dbReference type="GO" id="GO:0016567">
    <property type="term" value="P:protein ubiquitination"/>
    <property type="evidence" value="ECO:0000250"/>
    <property type="project" value="UniProtKB"/>
</dbReference>
<dbReference type="GO" id="GO:0032465">
    <property type="term" value="P:regulation of cytokinesis"/>
    <property type="evidence" value="ECO:0000250"/>
    <property type="project" value="UniProtKB"/>
</dbReference>
<dbReference type="CDD" id="cd18449">
    <property type="entry name" value="BACK_KLHL9_13"/>
    <property type="match status" value="1"/>
</dbReference>
<dbReference type="CDD" id="cd18239">
    <property type="entry name" value="BTB_POZ_KLHL9_13"/>
    <property type="match status" value="1"/>
</dbReference>
<dbReference type="FunFam" id="1.25.40.420:FF:000002">
    <property type="entry name" value="Kelch-like family member 13"/>
    <property type="match status" value="1"/>
</dbReference>
<dbReference type="FunFam" id="2.120.10.80:FF:000001">
    <property type="entry name" value="Kelch-like family member 13"/>
    <property type="match status" value="1"/>
</dbReference>
<dbReference type="FunFam" id="3.30.710.10:FF:000011">
    <property type="entry name" value="Kelch-like family member 13"/>
    <property type="match status" value="1"/>
</dbReference>
<dbReference type="Gene3D" id="1.25.40.420">
    <property type="match status" value="1"/>
</dbReference>
<dbReference type="Gene3D" id="2.120.10.80">
    <property type="entry name" value="Kelch-type beta propeller"/>
    <property type="match status" value="1"/>
</dbReference>
<dbReference type="Gene3D" id="3.30.710.10">
    <property type="entry name" value="Potassium Channel Kv1.1, Chain A"/>
    <property type="match status" value="1"/>
</dbReference>
<dbReference type="InterPro" id="IPR011705">
    <property type="entry name" value="BACK"/>
</dbReference>
<dbReference type="InterPro" id="IPR017096">
    <property type="entry name" value="BTB-kelch_protein"/>
</dbReference>
<dbReference type="InterPro" id="IPR000210">
    <property type="entry name" value="BTB/POZ_dom"/>
</dbReference>
<dbReference type="InterPro" id="IPR015915">
    <property type="entry name" value="Kelch-typ_b-propeller"/>
</dbReference>
<dbReference type="InterPro" id="IPR006652">
    <property type="entry name" value="Kelch_1"/>
</dbReference>
<dbReference type="InterPro" id="IPR011333">
    <property type="entry name" value="SKP1/BTB/POZ_sf"/>
</dbReference>
<dbReference type="PANTHER" id="PTHR45632:SF11">
    <property type="entry name" value="KELCH-LIKE PROTEIN 9"/>
    <property type="match status" value="1"/>
</dbReference>
<dbReference type="PANTHER" id="PTHR45632">
    <property type="entry name" value="LD33804P"/>
    <property type="match status" value="1"/>
</dbReference>
<dbReference type="Pfam" id="PF07707">
    <property type="entry name" value="BACK"/>
    <property type="match status" value="1"/>
</dbReference>
<dbReference type="Pfam" id="PF00651">
    <property type="entry name" value="BTB"/>
    <property type="match status" value="1"/>
</dbReference>
<dbReference type="Pfam" id="PF01344">
    <property type="entry name" value="Kelch_1"/>
    <property type="match status" value="1"/>
</dbReference>
<dbReference type="Pfam" id="PF24681">
    <property type="entry name" value="Kelch_KLHDC2_KLHL20_DRC7"/>
    <property type="match status" value="1"/>
</dbReference>
<dbReference type="PIRSF" id="PIRSF037037">
    <property type="entry name" value="Kelch-like_protein_gigaxonin"/>
    <property type="match status" value="1"/>
</dbReference>
<dbReference type="SMART" id="SM00875">
    <property type="entry name" value="BACK"/>
    <property type="match status" value="1"/>
</dbReference>
<dbReference type="SMART" id="SM00225">
    <property type="entry name" value="BTB"/>
    <property type="match status" value="1"/>
</dbReference>
<dbReference type="SMART" id="SM00612">
    <property type="entry name" value="Kelch"/>
    <property type="match status" value="6"/>
</dbReference>
<dbReference type="SUPFAM" id="SSF117281">
    <property type="entry name" value="Kelch motif"/>
    <property type="match status" value="1"/>
</dbReference>
<dbReference type="SUPFAM" id="SSF54695">
    <property type="entry name" value="POZ domain"/>
    <property type="match status" value="1"/>
</dbReference>
<dbReference type="PROSITE" id="PS50097">
    <property type="entry name" value="BTB"/>
    <property type="match status" value="1"/>
</dbReference>
<name>KLHL9_MOUSE</name>
<keyword id="KW-0131">Cell cycle</keyword>
<keyword id="KW-0132">Cell division</keyword>
<keyword id="KW-0880">Kelch repeat</keyword>
<keyword id="KW-0498">Mitosis</keyword>
<keyword id="KW-1185">Reference proteome</keyword>
<keyword id="KW-0677">Repeat</keyword>
<keyword id="KW-0833">Ubl conjugation pathway</keyword>
<gene>
    <name type="primary">Klhl9</name>
    <name type="synonym">Kiaa1354</name>
</gene>
<sequence>MKVSLGNGDMGVSAHLQPCKSGTTRFFTSNTHSSVVLQGFDQLRIEGLLCDVTLVPGDGEEIFPVHRAMMASASDYFKAMFTGGMKEKDLMCIKLHGVNKVGLKKIIDFIYTAKLSLNMDNLQDTLEAASFLQILPVLDFCKVFLISGVSLDNCVEVGRIANTYNLIEVDKYVNNFILKNFPALLNTGEFLKLPFERLAFVLSSNSLKHCSELELFKAACRWLRLEDPRMDYAAKLMKNIRFPLMTPQDLINYVQTVDFMRTDNTCVNLLLEASNYQMMPYMQPVMQSDRTAIRSDSTHLVTLGGVLRQQLVVSKELRMYDERAQEWKSLAPMDAPRYQHGIAVIGNFLYVVGGQSNYDTKGKTAVDTVFRFDPRYNKWMQVASLNEKRTFFHLSALKGHLYAVGGRSAAGELATVECYNPRMNEWSYVAKMSEPHYGHAGTVYGGLMYISGGITHDTFQNELMCFDPDTDKWTQKAPMTTVRGLHCMCTVGDKLYVIGGNHFRGTSDYDDVLSCEYYSPTLDQWTPIAAMLRGQSDVGVAVFENKIYVVGGYSWNNRCMVEIVQKYDPEKDEWHKVFDLPESLGGIRACTLTVFPPEENPGSPSRESPLSAPSDHS</sequence>
<comment type="function">
    <text evidence="1">Substrate-specific adapter of a BCR (BTB-CUL3-RBX1) E3 ubiquitin-protein ligase complex required for mitotic progression and cytokinesis. The BCR(KLHL9-KLHL13) E3 ubiquitin ligase complex mediates the ubiquitination of AURKB and controls the dynamic behavior of AURKB on mitotic chromosomes and thereby coordinates faithful mitotic progression and completion of cytokinesis (By similarity).</text>
</comment>
<comment type="pathway">
    <text>Protein modification; protein ubiquitination.</text>
</comment>
<comment type="subunit">
    <text evidence="1">Component of the BCR(KLHL9-KLHL13) E3 ubiquitin ligase complex, at least composed of CUL3, KLHL9, KLHL13 and RBX1. Interacts with AURKB (By similarity).</text>
</comment>
<comment type="sequence caution" evidence="4">
    <conflict type="erroneous initiation">
        <sequence resource="EMBL-CDS" id="BAC98148"/>
    </conflict>
</comment>